<reference key="1">
    <citation type="journal article" date="1999" name="Nature">
        <title>Evidence for lateral gene transfer between Archaea and Bacteria from genome sequence of Thermotoga maritima.</title>
        <authorList>
            <person name="Nelson K.E."/>
            <person name="Clayton R.A."/>
            <person name="Gill S.R."/>
            <person name="Gwinn M.L."/>
            <person name="Dodson R.J."/>
            <person name="Haft D.H."/>
            <person name="Hickey E.K."/>
            <person name="Peterson J.D."/>
            <person name="Nelson W.C."/>
            <person name="Ketchum K.A."/>
            <person name="McDonald L.A."/>
            <person name="Utterback T.R."/>
            <person name="Malek J.A."/>
            <person name="Linher K.D."/>
            <person name="Garrett M.M."/>
            <person name="Stewart A.M."/>
            <person name="Cotton M.D."/>
            <person name="Pratt M.S."/>
            <person name="Phillips C.A."/>
            <person name="Richardson D.L."/>
            <person name="Heidelberg J.F."/>
            <person name="Sutton G.G."/>
            <person name="Fleischmann R.D."/>
            <person name="Eisen J.A."/>
            <person name="White O."/>
            <person name="Salzberg S.L."/>
            <person name="Smith H.O."/>
            <person name="Venter J.C."/>
            <person name="Fraser C.M."/>
        </authorList>
    </citation>
    <scope>NUCLEOTIDE SEQUENCE [LARGE SCALE GENOMIC DNA]</scope>
    <source>
        <strain>ATCC 43589 / DSM 3109 / JCM 10099 / NBRC 100826 / MSB8</strain>
    </source>
</reference>
<reference key="2">
    <citation type="journal article" date="2013" name="Proc. Natl. Acad. Sci. U.S.A.">
        <title>Assembly and mechanism of a group II ECF transporter.</title>
        <authorList>
            <person name="Karpowich N.K."/>
            <person name="Wang D.N."/>
        </authorList>
    </citation>
    <scope>PROBABLE FUNCTION AS A TRANSPORT COMPONENT</scope>
    <scope>SUBUNIT</scope>
    <scope>SUBCELLULAR LOCATION</scope>
    <scope>EXPRESSION IN E.COLI</scope>
    <source>
        <strain>ATCC 43589 / DSM 3109 / JCM 10099 / NBRC 100826 / MSB8</strain>
    </source>
</reference>
<organism>
    <name type="scientific">Thermotoga maritima (strain ATCC 43589 / DSM 3109 / JCM 10099 / NBRC 100826 / MSB8)</name>
    <dbReference type="NCBI Taxonomy" id="243274"/>
    <lineage>
        <taxon>Bacteria</taxon>
        <taxon>Thermotogati</taxon>
        <taxon>Thermotogota</taxon>
        <taxon>Thermotogae</taxon>
        <taxon>Thermotogales</taxon>
        <taxon>Thermotogaceae</taxon>
        <taxon>Thermotoga</taxon>
    </lineage>
</organism>
<proteinExistence type="evidence at protein level"/>
<dbReference type="EMBL" id="AE000512">
    <property type="protein sequence ID" value="AAD35881.1"/>
    <property type="molecule type" value="Genomic_DNA"/>
</dbReference>
<dbReference type="PIR" id="H72334">
    <property type="entry name" value="H72334"/>
</dbReference>
<dbReference type="RefSeq" id="NP_228608.1">
    <property type="nucleotide sequence ID" value="NC_000853.1"/>
</dbReference>
<dbReference type="RefSeq" id="WP_004080866.1">
    <property type="nucleotide sequence ID" value="NZ_CP011107.1"/>
</dbReference>
<dbReference type="SMR" id="Q9WZQ6"/>
<dbReference type="FunCoup" id="Q9WZQ6">
    <property type="interactions" value="50"/>
</dbReference>
<dbReference type="STRING" id="243274.TM_0799"/>
<dbReference type="TCDB" id="3.A.1.25.5">
    <property type="family name" value="the atp-binding cassette (abc) superfamily"/>
</dbReference>
<dbReference type="PaxDb" id="243274-THEMA_00655"/>
<dbReference type="EnsemblBacteria" id="AAD35881">
    <property type="protein sequence ID" value="AAD35881"/>
    <property type="gene ID" value="TM_0799"/>
</dbReference>
<dbReference type="KEGG" id="tma:TM0799"/>
<dbReference type="KEGG" id="tmi:THEMA_00655"/>
<dbReference type="KEGG" id="tmm:Tmari_0800"/>
<dbReference type="KEGG" id="tmw:THMA_0818"/>
<dbReference type="eggNOG" id="COG1268">
    <property type="taxonomic scope" value="Bacteria"/>
</dbReference>
<dbReference type="InParanoid" id="Q9WZQ6"/>
<dbReference type="OrthoDB" id="9803495at2"/>
<dbReference type="Proteomes" id="UP000008183">
    <property type="component" value="Chromosome"/>
</dbReference>
<dbReference type="GO" id="GO:0005886">
    <property type="term" value="C:plasma membrane"/>
    <property type="evidence" value="ECO:0007669"/>
    <property type="project" value="UniProtKB-SubCell"/>
</dbReference>
<dbReference type="GO" id="GO:0015225">
    <property type="term" value="F:biotin transmembrane transporter activity"/>
    <property type="evidence" value="ECO:0007669"/>
    <property type="project" value="InterPro"/>
</dbReference>
<dbReference type="Gene3D" id="1.10.1760.20">
    <property type="match status" value="1"/>
</dbReference>
<dbReference type="InterPro" id="IPR003784">
    <property type="entry name" value="BioY"/>
</dbReference>
<dbReference type="PANTHER" id="PTHR34295">
    <property type="entry name" value="BIOTIN TRANSPORTER BIOY"/>
    <property type="match status" value="1"/>
</dbReference>
<dbReference type="PANTHER" id="PTHR34295:SF1">
    <property type="entry name" value="BIOTIN TRANSPORTER BIOY"/>
    <property type="match status" value="1"/>
</dbReference>
<dbReference type="Pfam" id="PF02632">
    <property type="entry name" value="BioY"/>
    <property type="match status" value="1"/>
</dbReference>
<dbReference type="PIRSF" id="PIRSF016661">
    <property type="entry name" value="BioY"/>
    <property type="match status" value="1"/>
</dbReference>
<comment type="function">
    <text evidence="3">Substrate-binding (S) component of an energy-coupling factor (ECF) ABC-transporter complex. Probably a biotin-binding protein that interacts with the energy-coupling factor (ECF) ABC-transporter complex. Unlike classic ABC transporters this ECF transporter provides the energy necessary to transport a number of different substrates. The substrates themselves are bound by transmembrane, not extracytoplasmic soluble proteins (Probable).</text>
</comment>
<comment type="subunit">
    <text evidence="2">Forms a stable energy-coupling factor (ECF) transporter complex composed of 2 membrane-embedded substrate-binding proteins (S component, RibU, BioY), 2 ATP-binding proteins (A component) and 2 transmembrane proteins (T component) upon coexpression in E.coli. A stable subcomplex with both A and T components are also isolated. This complex interacts with at least 2 substrate-specific components, BioY and RibU.</text>
</comment>
<comment type="subcellular location">
    <subcellularLocation>
        <location evidence="4">Cell inner membrane</location>
        <topology evidence="4">Multi-pass membrane protein</topology>
    </subcellularLocation>
</comment>
<comment type="similarity">
    <text evidence="3">Belongs to the BioY family.</text>
</comment>
<name>BIOY_THEMA</name>
<protein>
    <recommendedName>
        <fullName>Biotin transporter BioY</fullName>
    </recommendedName>
    <alternativeName>
        <fullName>Biotin ECF transporter S component BioY</fullName>
    </alternativeName>
</protein>
<accession>Q9WZQ6</accession>
<accession>G4FD25</accession>
<keyword id="KW-0997">Cell inner membrane</keyword>
<keyword id="KW-1003">Cell membrane</keyword>
<keyword id="KW-0472">Membrane</keyword>
<keyword id="KW-1185">Reference proteome</keyword>
<keyword id="KW-0812">Transmembrane</keyword>
<keyword id="KW-1133">Transmembrane helix</keyword>
<keyword id="KW-0813">Transport</keyword>
<feature type="chain" id="PRO_0000422263" description="Biotin transporter BioY">
    <location>
        <begin position="1"/>
        <end position="169"/>
    </location>
</feature>
<feature type="transmembrane region" description="Helical" evidence="1">
    <location>
        <begin position="9"/>
        <end position="29"/>
    </location>
</feature>
<feature type="transmembrane region" description="Helical" evidence="1">
    <location>
        <begin position="47"/>
        <end position="67"/>
    </location>
</feature>
<feature type="transmembrane region" description="Helical" evidence="1">
    <location>
        <begin position="75"/>
        <end position="95"/>
    </location>
</feature>
<feature type="transmembrane region" description="Helical" evidence="1">
    <location>
        <begin position="106"/>
        <end position="126"/>
    </location>
</feature>
<feature type="transmembrane region" description="Helical" evidence="1">
    <location>
        <begin position="139"/>
        <end position="159"/>
    </location>
</feature>
<gene>
    <name type="primary">bioY</name>
    <name type="ordered locus">TM_0799</name>
</gene>
<sequence>MRQLIKAGIFTALIVVGAWISIPLGPVPFTLQVFFVFLSAYVLGKKYGTLAVATYVLLGAMGLPVFANFKGGAQVLVGPTGGYLFGFILGAFVIGLLAEKKESFAWYLASGVAGLGIIYALGVFVLNFYVHDIRKAISVGFVPFVWFDLIKLVVAALIALRLKKLEVER</sequence>
<evidence type="ECO:0000255" key="1"/>
<evidence type="ECO:0000269" key="2">
    <source>
    </source>
</evidence>
<evidence type="ECO:0000305" key="3"/>
<evidence type="ECO:0000305" key="4">
    <source>
    </source>
</evidence>